<protein>
    <recommendedName>
        <fullName evidence="1">NADH-quinone oxidoreductase subunit C</fullName>
        <ecNumber evidence="1">7.1.1.-</ecNumber>
    </recommendedName>
    <alternativeName>
        <fullName evidence="1">NADH dehydrogenase I subunit C</fullName>
    </alternativeName>
    <alternativeName>
        <fullName evidence="1">NDH-1 subunit C</fullName>
    </alternativeName>
</protein>
<dbReference type="EC" id="7.1.1.-" evidence="1"/>
<dbReference type="EMBL" id="AM902716">
    <property type="protein sequence ID" value="CAP42018.1"/>
    <property type="molecule type" value="Genomic_DNA"/>
</dbReference>
<dbReference type="SMR" id="A9II05"/>
<dbReference type="STRING" id="94624.Bpet1679"/>
<dbReference type="KEGG" id="bpt:Bpet1679"/>
<dbReference type="eggNOG" id="COG0852">
    <property type="taxonomic scope" value="Bacteria"/>
</dbReference>
<dbReference type="Proteomes" id="UP000001225">
    <property type="component" value="Chromosome"/>
</dbReference>
<dbReference type="GO" id="GO:0005886">
    <property type="term" value="C:plasma membrane"/>
    <property type="evidence" value="ECO:0007669"/>
    <property type="project" value="UniProtKB-SubCell"/>
</dbReference>
<dbReference type="GO" id="GO:0008137">
    <property type="term" value="F:NADH dehydrogenase (ubiquinone) activity"/>
    <property type="evidence" value="ECO:0007669"/>
    <property type="project" value="InterPro"/>
</dbReference>
<dbReference type="GO" id="GO:0050136">
    <property type="term" value="F:NADH:ubiquinone reductase (non-electrogenic) activity"/>
    <property type="evidence" value="ECO:0007669"/>
    <property type="project" value="UniProtKB-UniRule"/>
</dbReference>
<dbReference type="GO" id="GO:0048038">
    <property type="term" value="F:quinone binding"/>
    <property type="evidence" value="ECO:0007669"/>
    <property type="project" value="UniProtKB-KW"/>
</dbReference>
<dbReference type="Gene3D" id="3.30.460.80">
    <property type="entry name" value="NADH:ubiquinone oxidoreductase, 30kDa subunit"/>
    <property type="match status" value="1"/>
</dbReference>
<dbReference type="HAMAP" id="MF_01357">
    <property type="entry name" value="NDH1_NuoC"/>
    <property type="match status" value="1"/>
</dbReference>
<dbReference type="InterPro" id="IPR010218">
    <property type="entry name" value="NADH_DH_suC"/>
</dbReference>
<dbReference type="InterPro" id="IPR037232">
    <property type="entry name" value="NADH_quin_OxRdtase_su_C/D-like"/>
</dbReference>
<dbReference type="InterPro" id="IPR001268">
    <property type="entry name" value="NADH_UbQ_OxRdtase_30kDa_su"/>
</dbReference>
<dbReference type="InterPro" id="IPR020396">
    <property type="entry name" value="NADH_UbQ_OxRdtase_CS"/>
</dbReference>
<dbReference type="NCBIfam" id="TIGR01961">
    <property type="entry name" value="NuoC_fam"/>
    <property type="match status" value="1"/>
</dbReference>
<dbReference type="NCBIfam" id="NF004730">
    <property type="entry name" value="PRK06074.1-1"/>
    <property type="match status" value="1"/>
</dbReference>
<dbReference type="PANTHER" id="PTHR10884:SF14">
    <property type="entry name" value="NADH DEHYDROGENASE [UBIQUINONE] IRON-SULFUR PROTEIN 3, MITOCHONDRIAL"/>
    <property type="match status" value="1"/>
</dbReference>
<dbReference type="PANTHER" id="PTHR10884">
    <property type="entry name" value="NADH DEHYDROGENASE UBIQUINONE IRON-SULFUR PROTEIN 3"/>
    <property type="match status" value="1"/>
</dbReference>
<dbReference type="Pfam" id="PF00329">
    <property type="entry name" value="Complex1_30kDa"/>
    <property type="match status" value="1"/>
</dbReference>
<dbReference type="SUPFAM" id="SSF143243">
    <property type="entry name" value="Nqo5-like"/>
    <property type="match status" value="1"/>
</dbReference>
<dbReference type="PROSITE" id="PS00542">
    <property type="entry name" value="COMPLEX1_30K"/>
    <property type="match status" value="1"/>
</dbReference>
<accession>A9II05</accession>
<proteinExistence type="inferred from homology"/>
<comment type="function">
    <text evidence="1">NDH-1 shuttles electrons from NADH, via FMN and iron-sulfur (Fe-S) centers, to quinones in the respiratory chain. The immediate electron acceptor for the enzyme in this species is believed to be ubiquinone. Couples the redox reaction to proton translocation (for every two electrons transferred, four hydrogen ions are translocated across the cytoplasmic membrane), and thus conserves the redox energy in a proton gradient.</text>
</comment>
<comment type="catalytic activity">
    <reaction evidence="1">
        <text>a quinone + NADH + 5 H(+)(in) = a quinol + NAD(+) + 4 H(+)(out)</text>
        <dbReference type="Rhea" id="RHEA:57888"/>
        <dbReference type="ChEBI" id="CHEBI:15378"/>
        <dbReference type="ChEBI" id="CHEBI:24646"/>
        <dbReference type="ChEBI" id="CHEBI:57540"/>
        <dbReference type="ChEBI" id="CHEBI:57945"/>
        <dbReference type="ChEBI" id="CHEBI:132124"/>
    </reaction>
</comment>
<comment type="subunit">
    <text evidence="1">NDH-1 is composed of 14 different subunits. Subunits NuoB, C, D, E, F, and G constitute the peripheral sector of the complex.</text>
</comment>
<comment type="subcellular location">
    <subcellularLocation>
        <location evidence="1">Cell inner membrane</location>
        <topology evidence="1">Peripheral membrane protein</topology>
        <orientation evidence="1">Cytoplasmic side</orientation>
    </subcellularLocation>
</comment>
<comment type="similarity">
    <text evidence="1">Belongs to the complex I 30 kDa subunit family.</text>
</comment>
<keyword id="KW-0997">Cell inner membrane</keyword>
<keyword id="KW-1003">Cell membrane</keyword>
<keyword id="KW-0472">Membrane</keyword>
<keyword id="KW-0520">NAD</keyword>
<keyword id="KW-0874">Quinone</keyword>
<keyword id="KW-1278">Translocase</keyword>
<keyword id="KW-0813">Transport</keyword>
<keyword id="KW-0830">Ubiquinone</keyword>
<reference key="1">
    <citation type="journal article" date="2008" name="BMC Genomics">
        <title>The missing link: Bordetella petrii is endowed with both the metabolic versatility of environmental bacteria and virulence traits of pathogenic Bordetellae.</title>
        <authorList>
            <person name="Gross R."/>
            <person name="Guzman C.A."/>
            <person name="Sebaihia M."/>
            <person name="Martin dos Santos V.A.P."/>
            <person name="Pieper D.H."/>
            <person name="Koebnik R."/>
            <person name="Lechner M."/>
            <person name="Bartels D."/>
            <person name="Buhrmester J."/>
            <person name="Choudhuri J.V."/>
            <person name="Ebensen T."/>
            <person name="Gaigalat L."/>
            <person name="Herrmann S."/>
            <person name="Khachane A.N."/>
            <person name="Larisch C."/>
            <person name="Link S."/>
            <person name="Linke B."/>
            <person name="Meyer F."/>
            <person name="Mormann S."/>
            <person name="Nakunst D."/>
            <person name="Rueckert C."/>
            <person name="Schneiker-Bekel S."/>
            <person name="Schulze K."/>
            <person name="Voerholter F.-J."/>
            <person name="Yevsa T."/>
            <person name="Engle J.T."/>
            <person name="Goldman W.E."/>
            <person name="Puehler A."/>
            <person name="Goebel U.B."/>
            <person name="Goesmann A."/>
            <person name="Bloecker H."/>
            <person name="Kaiser O."/>
            <person name="Martinez-Arias R."/>
        </authorList>
    </citation>
    <scope>NUCLEOTIDE SEQUENCE [LARGE SCALE GENOMIC DNA]</scope>
    <source>
        <strain>ATCC BAA-461 / DSM 12804 / CCUG 43448</strain>
    </source>
</reference>
<gene>
    <name evidence="1" type="primary">nuoC</name>
    <name type="ordered locus">Bpet1679</name>
</gene>
<sequence length="209" mass="23766">MTMTRLETLKHNLQAALGADIALTEALGELTLEVPADQWLAVCNKLRTDAGLSFETCIDLCGVDYLTWGNGTRQAGEDKVAGVQRSRYAVVAHLLSIAHNWRLRVRTWAPDDDFPMVGSLIDCWPGVNWFEREAFDLFGIVFEGHPDLRRILTDYGFIGHPFRKDFPLSGTVEMRYDPEQRRVIYQPVTIDPREITPRVVREDSYGLGR</sequence>
<organism>
    <name type="scientific">Bordetella petrii (strain ATCC BAA-461 / DSM 12804 / CCUG 43448)</name>
    <dbReference type="NCBI Taxonomy" id="340100"/>
    <lineage>
        <taxon>Bacteria</taxon>
        <taxon>Pseudomonadati</taxon>
        <taxon>Pseudomonadota</taxon>
        <taxon>Betaproteobacteria</taxon>
        <taxon>Burkholderiales</taxon>
        <taxon>Alcaligenaceae</taxon>
        <taxon>Bordetella</taxon>
    </lineage>
</organism>
<name>NUOC_BORPD</name>
<evidence type="ECO:0000255" key="1">
    <source>
        <dbReference type="HAMAP-Rule" id="MF_01357"/>
    </source>
</evidence>
<feature type="chain" id="PRO_0000358049" description="NADH-quinone oxidoreductase subunit C">
    <location>
        <begin position="1"/>
        <end position="209"/>
    </location>
</feature>